<organism>
    <name type="scientific">Arabidopsis thaliana</name>
    <name type="common">Mouse-ear cress</name>
    <dbReference type="NCBI Taxonomy" id="3702"/>
    <lineage>
        <taxon>Eukaryota</taxon>
        <taxon>Viridiplantae</taxon>
        <taxon>Streptophyta</taxon>
        <taxon>Embryophyta</taxon>
        <taxon>Tracheophyta</taxon>
        <taxon>Spermatophyta</taxon>
        <taxon>Magnoliopsida</taxon>
        <taxon>eudicotyledons</taxon>
        <taxon>Gunneridae</taxon>
        <taxon>Pentapetalae</taxon>
        <taxon>rosids</taxon>
        <taxon>malvids</taxon>
        <taxon>Brassicales</taxon>
        <taxon>Brassicaceae</taxon>
        <taxon>Camelineae</taxon>
        <taxon>Arabidopsis</taxon>
    </lineage>
</organism>
<comment type="function">
    <text evidence="5 6">Activates ubiquitin by first adenylating its C-terminal glycine residue with ATP, and thereafter linking this residue to the side chain of a cysteine residue in E1, yielding a ubiquitin-E1 thioester and free AMP.</text>
</comment>
<comment type="catalytic activity">
    <reaction evidence="6">
        <text>ATP + ubiquitin + [E1 ubiquitin-activating enzyme]-L-cysteine = AMP + diphosphate + S-ubiquitinyl-[E1 ubiquitin-activating enzyme]-L-cysteine.</text>
        <dbReference type="EC" id="6.2.1.45"/>
    </reaction>
</comment>
<comment type="pathway">
    <text evidence="6">Protein modification; protein ubiquitination.</text>
</comment>
<comment type="subunit">
    <text evidence="1">Monomer.</text>
</comment>
<comment type="tissue specificity">
    <text evidence="6">Expressed in leaves, flowers, roots and stems. Detected in germinating seeds, cotyledons, hypocotyls, vascular tissues, anthers, filaments, pollen, style, stigma, sepals, petals, ovary, developing ovules, funiculi and silique walls.</text>
</comment>
<comment type="developmental stage">
    <text evidence="6">Expressed over the entire range of development.</text>
</comment>
<comment type="miscellaneous">
    <text evidence="6">Both UBA1 and UBA2 are able to activate ubiquitin and transfer it to the E2s with equal efficiency.</text>
</comment>
<comment type="miscellaneous">
    <text evidence="5">Mutation in UBA1 (mos5) suppresses snc1-mediated constitutive resistance and affects the resistance responses conferred by only a subset of R-proteins.</text>
</comment>
<comment type="similarity">
    <text evidence="8">Belongs to the ubiquitin-activating E1 family.</text>
</comment>
<sequence>MLHKRASEANDKNDNTIIGSDLASSKKRRIDFTESSSDKSSSILASGSSRGFHGDSVVQQIDMAFGNSNRQEIDEDLHSRQLAVYGRETMRRLFASNVLISGMHGLGAEIAKNLILAGVKSVTLHDERVVELWDLSSNFVFSEDDVGKNRADASVQKLQDLNNAVVVSSLTKSLNKEDLSGFQVVVFSDISMERAIEFDDYCHSHQPPIAFVKADVRGLFGSVFCDFGPEFAVLDVDGEEPHTGIIASISNENQAFISCVDDERLEFEDGDLVVFSEVEGMTELNDGKPRKIKSTRPYSFTLDEDTTNYGTYVKGGIVTQVKQPKLLNFKPLREALKDPGDFLFSDFSKFDRPPLLHLAFQALDHFKAEAGRFPVAGSEEDAQKLISIATAINTGQGDLKVENVDQKLLRHFSFGAKAVLNPMAAMFGGIVGQEVVKACSGKFHPLFQFFYFDSVESLPSEPVDSSDFAPRNSRYDAQISVFGAKFQKKLEDAKVFTVGSGALGCEFLKNLALMGVSCGSQGKLTVTDDDIIEKSNLSRQFLFRDWNIGQAKSTVAASAAAVINPRFNIEALQNRVGAETENVFDDAFWENLTVVVNALDNVNARLYVDSRCLYFQKPLLESGTLGTKCNTQSVIPHLTENYGASRDPPEKQAPMCTVHSFPHNIDHCLTWARSEFEGLLEKTPAEVNAYLSSPVEYTNSMMSAGDAQARDTLERIVECLEKEKCETFQDCLTWARLRFEDYFVNRVKQLIYTFPEDAATSTGAPFWSAPKRFPRPLQYSSSDPSLLNFITATAILRAETFGIPIPEWTKNPKEAAEAVDRVIVPDFEPRQDAKIVTDEKATTLTTASVDDAAVIDDLIAKIDQCRHNLSPDFRMKPIQFEKDDDTNYHMDVIAGLANMRARNYSIPEVDKLKAKFIAGRIIPAIATSTAMATGLVCLELYKVLDGGHKVEAYRNTFANLALPLFSMAEPLPPKVVKHRDMAWTVWDRWVLKGNPTLREVLQWLEDKGLSAYSISCGSCLLFNSMFTRHKERMDKKVVDLARDVAKVELPPYRNHLDVVVACEDEDDNDVDIPLVSIYFR</sequence>
<reference key="1">
    <citation type="journal article" date="1997" name="Plant J.">
        <title>The ubiquitin-activating enzyme (E1) gene family in Arabidopsis thaliana.</title>
        <authorList>
            <person name="Hatfield P.M."/>
            <person name="Gosink M.M."/>
            <person name="Carpenter T.B."/>
            <person name="Vierstra R.D."/>
        </authorList>
    </citation>
    <scope>NUCLEOTIDE SEQUENCE [GENOMIC DNA]</scope>
    <scope>FUNCTION</scope>
    <scope>CATALYTIC ACTIVITY</scope>
    <scope>PATHWAY</scope>
    <scope>TISSUE SPECIFICITY</scope>
    <scope>DEVELOPMENTAL STAGE</scope>
    <source>
        <strain>cv. Columbia</strain>
    </source>
</reference>
<reference key="2">
    <citation type="journal article" date="1999" name="Nature">
        <title>Sequence and analysis of chromosome 2 of the plant Arabidopsis thaliana.</title>
        <authorList>
            <person name="Lin X."/>
            <person name="Kaul S."/>
            <person name="Rounsley S.D."/>
            <person name="Shea T.P."/>
            <person name="Benito M.-I."/>
            <person name="Town C.D."/>
            <person name="Fujii C.Y."/>
            <person name="Mason T.M."/>
            <person name="Bowman C.L."/>
            <person name="Barnstead M.E."/>
            <person name="Feldblyum T.V."/>
            <person name="Buell C.R."/>
            <person name="Ketchum K.A."/>
            <person name="Lee J.J."/>
            <person name="Ronning C.M."/>
            <person name="Koo H.L."/>
            <person name="Moffat K.S."/>
            <person name="Cronin L.A."/>
            <person name="Shen M."/>
            <person name="Pai G."/>
            <person name="Van Aken S."/>
            <person name="Umayam L."/>
            <person name="Tallon L.J."/>
            <person name="Gill J.E."/>
            <person name="Adams M.D."/>
            <person name="Carrera A.J."/>
            <person name="Creasy T.H."/>
            <person name="Goodman H.M."/>
            <person name="Somerville C.R."/>
            <person name="Copenhaver G.P."/>
            <person name="Preuss D."/>
            <person name="Nierman W.C."/>
            <person name="White O."/>
            <person name="Eisen J.A."/>
            <person name="Salzberg S.L."/>
            <person name="Fraser C.M."/>
            <person name="Venter J.C."/>
        </authorList>
    </citation>
    <scope>NUCLEOTIDE SEQUENCE [LARGE SCALE GENOMIC DNA]</scope>
    <source>
        <strain>cv. Columbia</strain>
    </source>
</reference>
<reference key="3">
    <citation type="journal article" date="2017" name="Plant J.">
        <title>Araport11: a complete reannotation of the Arabidopsis thaliana reference genome.</title>
        <authorList>
            <person name="Cheng C.Y."/>
            <person name="Krishnakumar V."/>
            <person name="Chan A.P."/>
            <person name="Thibaud-Nissen F."/>
            <person name="Schobel S."/>
            <person name="Town C.D."/>
        </authorList>
    </citation>
    <scope>GENOME REANNOTATION</scope>
    <source>
        <strain>cv. Columbia</strain>
    </source>
</reference>
<reference key="4">
    <citation type="journal article" date="2003" name="Science">
        <title>Empirical analysis of transcriptional activity in the Arabidopsis genome.</title>
        <authorList>
            <person name="Yamada K."/>
            <person name="Lim J."/>
            <person name="Dale J.M."/>
            <person name="Chen H."/>
            <person name="Shinn P."/>
            <person name="Palm C.J."/>
            <person name="Southwick A.M."/>
            <person name="Wu H.C."/>
            <person name="Kim C.J."/>
            <person name="Nguyen M."/>
            <person name="Pham P.K."/>
            <person name="Cheuk R.F."/>
            <person name="Karlin-Newmann G."/>
            <person name="Liu S.X."/>
            <person name="Lam B."/>
            <person name="Sakano H."/>
            <person name="Wu T."/>
            <person name="Yu G."/>
            <person name="Miranda M."/>
            <person name="Quach H.L."/>
            <person name="Tripp M."/>
            <person name="Chang C.H."/>
            <person name="Lee J.M."/>
            <person name="Toriumi M.J."/>
            <person name="Chan M.M."/>
            <person name="Tang C.C."/>
            <person name="Onodera C.S."/>
            <person name="Deng J.M."/>
            <person name="Akiyama K."/>
            <person name="Ansari Y."/>
            <person name="Arakawa T."/>
            <person name="Banh J."/>
            <person name="Banno F."/>
            <person name="Bowser L."/>
            <person name="Brooks S.Y."/>
            <person name="Carninci P."/>
            <person name="Chao Q."/>
            <person name="Choy N."/>
            <person name="Enju A."/>
            <person name="Goldsmith A.D."/>
            <person name="Gurjal M."/>
            <person name="Hansen N.F."/>
            <person name="Hayashizaki Y."/>
            <person name="Johnson-Hopson C."/>
            <person name="Hsuan V.W."/>
            <person name="Iida K."/>
            <person name="Karnes M."/>
            <person name="Khan S."/>
            <person name="Koesema E."/>
            <person name="Ishida J."/>
            <person name="Jiang P.X."/>
            <person name="Jones T."/>
            <person name="Kawai J."/>
            <person name="Kamiya A."/>
            <person name="Meyers C."/>
            <person name="Nakajima M."/>
            <person name="Narusaka M."/>
            <person name="Seki M."/>
            <person name="Sakurai T."/>
            <person name="Satou M."/>
            <person name="Tamse R."/>
            <person name="Vaysberg M."/>
            <person name="Wallender E.K."/>
            <person name="Wong C."/>
            <person name="Yamamura Y."/>
            <person name="Yuan S."/>
            <person name="Shinozaki K."/>
            <person name="Davis R.W."/>
            <person name="Theologis A."/>
            <person name="Ecker J.R."/>
        </authorList>
    </citation>
    <scope>NUCLEOTIDE SEQUENCE [LARGE SCALE MRNA]</scope>
    <source>
        <strain>cv. Columbia</strain>
    </source>
</reference>
<reference key="5">
    <citation type="journal article" date="2007" name="Mol. Cell. Proteomics">
        <title>Multidimensional protein identification technology (MudPIT) analysis of ubiquitinated proteins in plants.</title>
        <authorList>
            <person name="Maor R."/>
            <person name="Jones A."/>
            <person name="Nuehse T.S."/>
            <person name="Studholme D.J."/>
            <person name="Peck S.C."/>
            <person name="Shirasu K."/>
        </authorList>
    </citation>
    <scope>IDENTIFICATION BY MASS SPECTROMETRY [LARGE SCALE ANALYSIS]</scope>
    <source>
        <strain>cv. Landsberg erecta</strain>
    </source>
</reference>
<reference key="6">
    <citation type="journal article" date="2007" name="Plant J.">
        <title>The ubiquitin pathway is required for innate immunity in Arabidopsis.</title>
        <authorList>
            <person name="Goritschnig S."/>
            <person name="Zhang Y."/>
            <person name="Li X."/>
        </authorList>
    </citation>
    <scope>FUNCTION</scope>
    <scope>MUTAGENESIS OF 1032-ARG--VAL-1037</scope>
</reference>
<accession>P93028</accession>
<accession>Q8RX82</accession>
<gene>
    <name type="primary">UBA1</name>
    <name type="synonym">MOS5</name>
    <name type="ordered locus">At2g30110</name>
    <name type="ORF">T27E13.15</name>
</gene>
<feature type="chain" id="PRO_0000399395" description="Ubiquitin-activating enzyme E1 1">
    <location>
        <begin position="1"/>
        <end position="1080"/>
    </location>
</feature>
<feature type="region of interest" description="Disordered" evidence="4">
    <location>
        <begin position="1"/>
        <end position="20"/>
    </location>
</feature>
<feature type="region of interest" description="Disordered" evidence="4">
    <location>
        <begin position="29"/>
        <end position="50"/>
    </location>
</feature>
<feature type="compositionally biased region" description="Basic and acidic residues" evidence="4">
    <location>
        <begin position="1"/>
        <end position="14"/>
    </location>
</feature>
<feature type="compositionally biased region" description="Low complexity" evidence="4">
    <location>
        <begin position="38"/>
        <end position="49"/>
    </location>
</feature>
<feature type="active site" description="Glycyl thioester intermediate" evidence="3">
    <location>
        <position position="656"/>
    </location>
</feature>
<feature type="binding site" evidence="2">
    <location>
        <position position="502"/>
    </location>
    <ligand>
        <name>ATP</name>
        <dbReference type="ChEBI" id="CHEBI:30616"/>
    </ligand>
</feature>
<feature type="binding site" evidence="2">
    <location>
        <position position="528"/>
    </location>
    <ligand>
        <name>ATP</name>
        <dbReference type="ChEBI" id="CHEBI:30616"/>
    </ligand>
</feature>
<feature type="binding site" evidence="2">
    <location>
        <position position="539"/>
    </location>
    <ligand>
        <name>ATP</name>
        <dbReference type="ChEBI" id="CHEBI:30616"/>
    </ligand>
</feature>
<feature type="binding site" evidence="2">
    <location>
        <position position="552"/>
    </location>
    <ligand>
        <name>ATP</name>
        <dbReference type="ChEBI" id="CHEBI:30616"/>
    </ligand>
</feature>
<feature type="binding site" evidence="2">
    <location>
        <begin position="600"/>
        <end position="601"/>
    </location>
    <ligand>
        <name>ATP</name>
        <dbReference type="ChEBI" id="CHEBI:30616"/>
    </ligand>
</feature>
<feature type="mutagenesis site" description="In mos5; enhanced disease susceptibility." evidence="5">
    <original>RMDKKV</original>
    <variation>S</variation>
    <location>
        <begin position="1032"/>
        <end position="1037"/>
    </location>
</feature>
<feature type="sequence conflict" description="In Ref. 4; AAP21171/AAL90910." evidence="8" ref="4">
    <original>D</original>
    <variation>G</variation>
    <location>
        <position position="883"/>
    </location>
</feature>
<protein>
    <recommendedName>
        <fullName>Ubiquitin-activating enzyme E1 1</fullName>
        <shortName evidence="7">AtUBA1</shortName>
        <ecNumber evidence="6">6.2.1.45</ecNumber>
    </recommendedName>
    <alternativeName>
        <fullName>Protein MODIFIER OF SNC1 5</fullName>
    </alternativeName>
</protein>
<keyword id="KW-0067">ATP-binding</keyword>
<keyword id="KW-0436">Ligase</keyword>
<keyword id="KW-0547">Nucleotide-binding</keyword>
<keyword id="KW-1185">Reference proteome</keyword>
<keyword id="KW-0833">Ubl conjugation pathway</keyword>
<dbReference type="EC" id="6.2.1.45" evidence="6"/>
<dbReference type="EMBL" id="U80808">
    <property type="protein sequence ID" value="AAB39246.1"/>
    <property type="molecule type" value="Genomic_DNA"/>
</dbReference>
<dbReference type="EMBL" id="AC004165">
    <property type="protein sequence ID" value="AAC16961.1"/>
    <property type="molecule type" value="Genomic_DNA"/>
</dbReference>
<dbReference type="EMBL" id="CP002685">
    <property type="protein sequence ID" value="AEC08346.1"/>
    <property type="molecule type" value="Genomic_DNA"/>
</dbReference>
<dbReference type="EMBL" id="AY090248">
    <property type="protein sequence ID" value="AAL90910.1"/>
    <property type="molecule type" value="mRNA"/>
</dbReference>
<dbReference type="EMBL" id="BT006363">
    <property type="protein sequence ID" value="AAP21171.1"/>
    <property type="molecule type" value="mRNA"/>
</dbReference>
<dbReference type="PIR" id="T00587">
    <property type="entry name" value="T00587"/>
</dbReference>
<dbReference type="RefSeq" id="NP_565693.1">
    <property type="nucleotide sequence ID" value="NM_128566.4"/>
</dbReference>
<dbReference type="SMR" id="P93028"/>
<dbReference type="BioGRID" id="2911">
    <property type="interactions" value="33"/>
</dbReference>
<dbReference type="FunCoup" id="P93028">
    <property type="interactions" value="4931"/>
</dbReference>
<dbReference type="IntAct" id="P93028">
    <property type="interactions" value="1"/>
</dbReference>
<dbReference type="STRING" id="3702.P93028"/>
<dbReference type="iPTMnet" id="P93028"/>
<dbReference type="PaxDb" id="3702-AT2G30110.1"/>
<dbReference type="ProteomicsDB" id="243240"/>
<dbReference type="EnsemblPlants" id="AT2G30110.1">
    <property type="protein sequence ID" value="AT2G30110.1"/>
    <property type="gene ID" value="AT2G30110"/>
</dbReference>
<dbReference type="GeneID" id="817562"/>
<dbReference type="Gramene" id="AT2G30110.1">
    <property type="protein sequence ID" value="AT2G30110.1"/>
    <property type="gene ID" value="AT2G30110"/>
</dbReference>
<dbReference type="KEGG" id="ath:AT2G30110"/>
<dbReference type="Araport" id="AT2G30110"/>
<dbReference type="TAIR" id="AT2G30110">
    <property type="gene designation" value="UBA1"/>
</dbReference>
<dbReference type="eggNOG" id="KOG2012">
    <property type="taxonomic scope" value="Eukaryota"/>
</dbReference>
<dbReference type="HOGENOM" id="CLU_002556_0_0_1"/>
<dbReference type="InParanoid" id="P93028"/>
<dbReference type="OMA" id="GANLHAF"/>
<dbReference type="PhylomeDB" id="P93028"/>
<dbReference type="BRENDA" id="6.2.1.45">
    <property type="organism ID" value="399"/>
</dbReference>
<dbReference type="UniPathway" id="UPA00143"/>
<dbReference type="CD-CODE" id="4299E36E">
    <property type="entry name" value="Nucleolus"/>
</dbReference>
<dbReference type="PRO" id="PR:P93028"/>
<dbReference type="Proteomes" id="UP000006548">
    <property type="component" value="Chromosome 2"/>
</dbReference>
<dbReference type="ExpressionAtlas" id="P93028">
    <property type="expression patterns" value="baseline and differential"/>
</dbReference>
<dbReference type="GO" id="GO:0005829">
    <property type="term" value="C:cytosol"/>
    <property type="evidence" value="ECO:0007005"/>
    <property type="project" value="TAIR"/>
</dbReference>
<dbReference type="GO" id="GO:0005777">
    <property type="term" value="C:peroxisome"/>
    <property type="evidence" value="ECO:0007005"/>
    <property type="project" value="TAIR"/>
</dbReference>
<dbReference type="GO" id="GO:0009506">
    <property type="term" value="C:plasmodesma"/>
    <property type="evidence" value="ECO:0007005"/>
    <property type="project" value="TAIR"/>
</dbReference>
<dbReference type="GO" id="GO:0005524">
    <property type="term" value="F:ATP binding"/>
    <property type="evidence" value="ECO:0007669"/>
    <property type="project" value="UniProtKB-KW"/>
</dbReference>
<dbReference type="GO" id="GO:0004839">
    <property type="term" value="F:ubiquitin activating enzyme activity"/>
    <property type="evidence" value="ECO:0007669"/>
    <property type="project" value="UniProtKB-EC"/>
</dbReference>
<dbReference type="GO" id="GO:0004842">
    <property type="term" value="F:ubiquitin-protein transferase activity"/>
    <property type="evidence" value="ECO:0000314"/>
    <property type="project" value="TAIR"/>
</dbReference>
<dbReference type="GO" id="GO:0016567">
    <property type="term" value="P:protein ubiquitination"/>
    <property type="evidence" value="ECO:0000314"/>
    <property type="project" value="TAIR"/>
</dbReference>
<dbReference type="GO" id="GO:0051707">
    <property type="term" value="P:response to other organism"/>
    <property type="evidence" value="ECO:0000315"/>
    <property type="project" value="TAIR"/>
</dbReference>
<dbReference type="CDD" id="cd01491">
    <property type="entry name" value="Ube1_repeat1"/>
    <property type="match status" value="1"/>
</dbReference>
<dbReference type="CDD" id="cd01490">
    <property type="entry name" value="Ube1_repeat2"/>
    <property type="match status" value="1"/>
</dbReference>
<dbReference type="FunFam" id="3.40.50.12550:FF:000001">
    <property type="entry name" value="Ubiquitin-activating enzyme E1 1"/>
    <property type="match status" value="1"/>
</dbReference>
<dbReference type="FunFam" id="3.40.50.720:FF:000015">
    <property type="entry name" value="Ubiquitin-activating enzyme E1 1"/>
    <property type="match status" value="1"/>
</dbReference>
<dbReference type="FunFam" id="1.10.10.2660:FF:000002">
    <property type="entry name" value="Ubiquitin-activating enzyme E1 2"/>
    <property type="match status" value="1"/>
</dbReference>
<dbReference type="FunFam" id="3.10.290.60:FF:000001">
    <property type="entry name" value="Ubiquitin-activating enzyme E1 2"/>
    <property type="match status" value="1"/>
</dbReference>
<dbReference type="FunFam" id="3.50.50.80:FF:000003">
    <property type="entry name" value="Ubiquitin-activating enzyme E1 2"/>
    <property type="match status" value="1"/>
</dbReference>
<dbReference type="FunFam" id="2.40.30.180:FF:000001">
    <property type="entry name" value="ubiquitin-like modifier-activating enzyme 1"/>
    <property type="match status" value="1"/>
</dbReference>
<dbReference type="Gene3D" id="3.40.50.720">
    <property type="entry name" value="NAD(P)-binding Rossmann-like Domain"/>
    <property type="match status" value="1"/>
</dbReference>
<dbReference type="Gene3D" id="2.40.30.180">
    <property type="entry name" value="Ubiquitin-activating enzyme E1, FCCH domain"/>
    <property type="match status" value="1"/>
</dbReference>
<dbReference type="Gene3D" id="3.50.50.80">
    <property type="entry name" value="Ubiquitin-activating enzyme E1, inactive adenylation domain, subdomain 1"/>
    <property type="match status" value="1"/>
</dbReference>
<dbReference type="Gene3D" id="3.40.50.12550">
    <property type="entry name" value="Ubiquitin-activating enzyme E1, inactive adenylation domain, subdomain 2"/>
    <property type="match status" value="1"/>
</dbReference>
<dbReference type="Gene3D" id="1.10.10.2660">
    <property type="entry name" value="Ubiquitin-activating enzyme E1, SCCH domain"/>
    <property type="match status" value="1"/>
</dbReference>
<dbReference type="Gene3D" id="3.10.290.60">
    <property type="entry name" value="Ubiquitin-activating enzyme E1, UFD domain"/>
    <property type="match status" value="1"/>
</dbReference>
<dbReference type="InterPro" id="IPR032420">
    <property type="entry name" value="E1_4HB"/>
</dbReference>
<dbReference type="InterPro" id="IPR032418">
    <property type="entry name" value="E1_FCCH"/>
</dbReference>
<dbReference type="InterPro" id="IPR042302">
    <property type="entry name" value="E1_FCCH_sf"/>
</dbReference>
<dbReference type="InterPro" id="IPR045886">
    <property type="entry name" value="ThiF/MoeB/HesA"/>
</dbReference>
<dbReference type="InterPro" id="IPR000594">
    <property type="entry name" value="ThiF_NAD_FAD-bd"/>
</dbReference>
<dbReference type="InterPro" id="IPR018965">
    <property type="entry name" value="Ub-activating_enz_E1_C"/>
</dbReference>
<dbReference type="InterPro" id="IPR042449">
    <property type="entry name" value="Ub-E1_IAD_1"/>
</dbReference>
<dbReference type="InterPro" id="IPR038252">
    <property type="entry name" value="UBA_E1_C_sf"/>
</dbReference>
<dbReference type="InterPro" id="IPR019572">
    <property type="entry name" value="UBA_E1_SCCH"/>
</dbReference>
<dbReference type="InterPro" id="IPR042063">
    <property type="entry name" value="Ubi_acti_E1_SCCH"/>
</dbReference>
<dbReference type="InterPro" id="IPR035985">
    <property type="entry name" value="Ubiquitin-activating_enz"/>
</dbReference>
<dbReference type="InterPro" id="IPR018075">
    <property type="entry name" value="UBQ-activ_enz_E1"/>
</dbReference>
<dbReference type="InterPro" id="IPR018074">
    <property type="entry name" value="UBQ-activ_enz_E1_CS"/>
</dbReference>
<dbReference type="InterPro" id="IPR033127">
    <property type="entry name" value="UBQ-activ_enz_E1_Cys_AS"/>
</dbReference>
<dbReference type="InterPro" id="IPR000011">
    <property type="entry name" value="UBQ/SUMO-activ_enz_E1-like"/>
</dbReference>
<dbReference type="NCBIfam" id="TIGR01408">
    <property type="entry name" value="Ube1"/>
    <property type="match status" value="1"/>
</dbReference>
<dbReference type="PANTHER" id="PTHR10953:SF162">
    <property type="entry name" value="SUMO-ACTIVATING ENZYME SUBUNIT 1"/>
    <property type="match status" value="1"/>
</dbReference>
<dbReference type="PANTHER" id="PTHR10953">
    <property type="entry name" value="UBIQUITIN-ACTIVATING ENZYME E1"/>
    <property type="match status" value="1"/>
</dbReference>
<dbReference type="Pfam" id="PF16191">
    <property type="entry name" value="E1_4HB"/>
    <property type="match status" value="1"/>
</dbReference>
<dbReference type="Pfam" id="PF16190">
    <property type="entry name" value="E1_FCCH"/>
    <property type="match status" value="1"/>
</dbReference>
<dbReference type="Pfam" id="PF09358">
    <property type="entry name" value="E1_UFD"/>
    <property type="match status" value="1"/>
</dbReference>
<dbReference type="Pfam" id="PF00899">
    <property type="entry name" value="ThiF"/>
    <property type="match status" value="2"/>
</dbReference>
<dbReference type="Pfam" id="PF10585">
    <property type="entry name" value="UBA_E1_SCCH"/>
    <property type="match status" value="1"/>
</dbReference>
<dbReference type="PRINTS" id="PR01849">
    <property type="entry name" value="UBIQUITINACT"/>
</dbReference>
<dbReference type="SMART" id="SM00985">
    <property type="entry name" value="UBA_e1_C"/>
    <property type="match status" value="1"/>
</dbReference>
<dbReference type="SUPFAM" id="SSF69572">
    <property type="entry name" value="Activating enzymes of the ubiquitin-like proteins"/>
    <property type="match status" value="2"/>
</dbReference>
<dbReference type="PROSITE" id="PS00536">
    <property type="entry name" value="UBIQUITIN_ACTIVAT_1"/>
    <property type="match status" value="1"/>
</dbReference>
<dbReference type="PROSITE" id="PS00865">
    <property type="entry name" value="UBIQUITIN_ACTIVAT_2"/>
    <property type="match status" value="1"/>
</dbReference>
<proteinExistence type="evidence at protein level"/>
<evidence type="ECO:0000250" key="1"/>
<evidence type="ECO:0000250" key="2">
    <source>
        <dbReference type="UniProtKB" id="P22515"/>
    </source>
</evidence>
<evidence type="ECO:0000255" key="3">
    <source>
        <dbReference type="PROSITE-ProRule" id="PRU10132"/>
    </source>
</evidence>
<evidence type="ECO:0000256" key="4">
    <source>
        <dbReference type="SAM" id="MobiDB-lite"/>
    </source>
</evidence>
<evidence type="ECO:0000269" key="5">
    <source>
    </source>
</evidence>
<evidence type="ECO:0000269" key="6">
    <source>
    </source>
</evidence>
<evidence type="ECO:0000303" key="7">
    <source>
    </source>
</evidence>
<evidence type="ECO:0000305" key="8"/>
<name>UBE11_ARATH</name>